<reference key="1">
    <citation type="journal article" date="2005" name="Science">
        <title>The transcriptional landscape of the mammalian genome.</title>
        <authorList>
            <person name="Carninci P."/>
            <person name="Kasukawa T."/>
            <person name="Katayama S."/>
            <person name="Gough J."/>
            <person name="Frith M.C."/>
            <person name="Maeda N."/>
            <person name="Oyama R."/>
            <person name="Ravasi T."/>
            <person name="Lenhard B."/>
            <person name="Wells C."/>
            <person name="Kodzius R."/>
            <person name="Shimokawa K."/>
            <person name="Bajic V.B."/>
            <person name="Brenner S.E."/>
            <person name="Batalov S."/>
            <person name="Forrest A.R."/>
            <person name="Zavolan M."/>
            <person name="Davis M.J."/>
            <person name="Wilming L.G."/>
            <person name="Aidinis V."/>
            <person name="Allen J.E."/>
            <person name="Ambesi-Impiombato A."/>
            <person name="Apweiler R."/>
            <person name="Aturaliya R.N."/>
            <person name="Bailey T.L."/>
            <person name="Bansal M."/>
            <person name="Baxter L."/>
            <person name="Beisel K.W."/>
            <person name="Bersano T."/>
            <person name="Bono H."/>
            <person name="Chalk A.M."/>
            <person name="Chiu K.P."/>
            <person name="Choudhary V."/>
            <person name="Christoffels A."/>
            <person name="Clutterbuck D.R."/>
            <person name="Crowe M.L."/>
            <person name="Dalla E."/>
            <person name="Dalrymple B.P."/>
            <person name="de Bono B."/>
            <person name="Della Gatta G."/>
            <person name="di Bernardo D."/>
            <person name="Down T."/>
            <person name="Engstrom P."/>
            <person name="Fagiolini M."/>
            <person name="Faulkner G."/>
            <person name="Fletcher C.F."/>
            <person name="Fukushima T."/>
            <person name="Furuno M."/>
            <person name="Futaki S."/>
            <person name="Gariboldi M."/>
            <person name="Georgii-Hemming P."/>
            <person name="Gingeras T.R."/>
            <person name="Gojobori T."/>
            <person name="Green R.E."/>
            <person name="Gustincich S."/>
            <person name="Harbers M."/>
            <person name="Hayashi Y."/>
            <person name="Hensch T.K."/>
            <person name="Hirokawa N."/>
            <person name="Hill D."/>
            <person name="Huminiecki L."/>
            <person name="Iacono M."/>
            <person name="Ikeo K."/>
            <person name="Iwama A."/>
            <person name="Ishikawa T."/>
            <person name="Jakt M."/>
            <person name="Kanapin A."/>
            <person name="Katoh M."/>
            <person name="Kawasawa Y."/>
            <person name="Kelso J."/>
            <person name="Kitamura H."/>
            <person name="Kitano H."/>
            <person name="Kollias G."/>
            <person name="Krishnan S.P."/>
            <person name="Kruger A."/>
            <person name="Kummerfeld S.K."/>
            <person name="Kurochkin I.V."/>
            <person name="Lareau L.F."/>
            <person name="Lazarevic D."/>
            <person name="Lipovich L."/>
            <person name="Liu J."/>
            <person name="Liuni S."/>
            <person name="McWilliam S."/>
            <person name="Madan Babu M."/>
            <person name="Madera M."/>
            <person name="Marchionni L."/>
            <person name="Matsuda H."/>
            <person name="Matsuzawa S."/>
            <person name="Miki H."/>
            <person name="Mignone F."/>
            <person name="Miyake S."/>
            <person name="Morris K."/>
            <person name="Mottagui-Tabar S."/>
            <person name="Mulder N."/>
            <person name="Nakano N."/>
            <person name="Nakauchi H."/>
            <person name="Ng P."/>
            <person name="Nilsson R."/>
            <person name="Nishiguchi S."/>
            <person name="Nishikawa S."/>
            <person name="Nori F."/>
            <person name="Ohara O."/>
            <person name="Okazaki Y."/>
            <person name="Orlando V."/>
            <person name="Pang K.C."/>
            <person name="Pavan W.J."/>
            <person name="Pavesi G."/>
            <person name="Pesole G."/>
            <person name="Petrovsky N."/>
            <person name="Piazza S."/>
            <person name="Reed J."/>
            <person name="Reid J.F."/>
            <person name="Ring B.Z."/>
            <person name="Ringwald M."/>
            <person name="Rost B."/>
            <person name="Ruan Y."/>
            <person name="Salzberg S.L."/>
            <person name="Sandelin A."/>
            <person name="Schneider C."/>
            <person name="Schoenbach C."/>
            <person name="Sekiguchi K."/>
            <person name="Semple C.A."/>
            <person name="Seno S."/>
            <person name="Sessa L."/>
            <person name="Sheng Y."/>
            <person name="Shibata Y."/>
            <person name="Shimada H."/>
            <person name="Shimada K."/>
            <person name="Silva D."/>
            <person name="Sinclair B."/>
            <person name="Sperling S."/>
            <person name="Stupka E."/>
            <person name="Sugiura K."/>
            <person name="Sultana R."/>
            <person name="Takenaka Y."/>
            <person name="Taki K."/>
            <person name="Tammoja K."/>
            <person name="Tan S.L."/>
            <person name="Tang S."/>
            <person name="Taylor M.S."/>
            <person name="Tegner J."/>
            <person name="Teichmann S.A."/>
            <person name="Ueda H.R."/>
            <person name="van Nimwegen E."/>
            <person name="Verardo R."/>
            <person name="Wei C.L."/>
            <person name="Yagi K."/>
            <person name="Yamanishi H."/>
            <person name="Zabarovsky E."/>
            <person name="Zhu S."/>
            <person name="Zimmer A."/>
            <person name="Hide W."/>
            <person name="Bult C."/>
            <person name="Grimmond S.M."/>
            <person name="Teasdale R.D."/>
            <person name="Liu E.T."/>
            <person name="Brusic V."/>
            <person name="Quackenbush J."/>
            <person name="Wahlestedt C."/>
            <person name="Mattick J.S."/>
            <person name="Hume D.A."/>
            <person name="Kai C."/>
            <person name="Sasaki D."/>
            <person name="Tomaru Y."/>
            <person name="Fukuda S."/>
            <person name="Kanamori-Katayama M."/>
            <person name="Suzuki M."/>
            <person name="Aoki J."/>
            <person name="Arakawa T."/>
            <person name="Iida J."/>
            <person name="Imamura K."/>
            <person name="Itoh M."/>
            <person name="Kato T."/>
            <person name="Kawaji H."/>
            <person name="Kawagashira N."/>
            <person name="Kawashima T."/>
            <person name="Kojima M."/>
            <person name="Kondo S."/>
            <person name="Konno H."/>
            <person name="Nakano K."/>
            <person name="Ninomiya N."/>
            <person name="Nishio T."/>
            <person name="Okada M."/>
            <person name="Plessy C."/>
            <person name="Shibata K."/>
            <person name="Shiraki T."/>
            <person name="Suzuki S."/>
            <person name="Tagami M."/>
            <person name="Waki K."/>
            <person name="Watahiki A."/>
            <person name="Okamura-Oho Y."/>
            <person name="Suzuki H."/>
            <person name="Kawai J."/>
            <person name="Hayashizaki Y."/>
        </authorList>
    </citation>
    <scope>NUCLEOTIDE SEQUENCE [LARGE SCALE MRNA] (ISOFORM 2)</scope>
    <source>
        <strain>C57BL/6J</strain>
        <tissue>Small intestine</tissue>
    </source>
</reference>
<reference key="2">
    <citation type="journal article" date="2004" name="Genome Res.">
        <title>The status, quality, and expansion of the NIH full-length cDNA project: the Mammalian Gene Collection (MGC).</title>
        <authorList>
            <consortium name="The MGC Project Team"/>
        </authorList>
    </citation>
    <scope>NUCLEOTIDE SEQUENCE [LARGE SCALE MRNA] (ISOFORMS 1 AND 2)</scope>
    <source>
        <strain>FVB/N</strain>
        <tissue>Mammary tumor</tissue>
    </source>
</reference>
<reference key="3">
    <citation type="journal article" date="2010" name="Cell">
        <title>A tissue-specific atlas of mouse protein phosphorylation and expression.</title>
        <authorList>
            <person name="Huttlin E.L."/>
            <person name="Jedrychowski M.P."/>
            <person name="Elias J.E."/>
            <person name="Goswami T."/>
            <person name="Rad R."/>
            <person name="Beausoleil S.A."/>
            <person name="Villen J."/>
            <person name="Haas W."/>
            <person name="Sowa M.E."/>
            <person name="Gygi S.P."/>
        </authorList>
    </citation>
    <scope>IDENTIFICATION BY MASS SPECTROMETRY [LARGE SCALE ANALYSIS]</scope>
    <source>
        <tissue>Pancreas</tissue>
    </source>
</reference>
<keyword id="KW-0025">Alternative splicing</keyword>
<keyword id="KW-0963">Cytoplasm</keyword>
<keyword id="KW-0344">Guanine-nucleotide releasing factor</keyword>
<keyword id="KW-1185">Reference proteome</keyword>
<evidence type="ECO:0000250" key="1"/>
<evidence type="ECO:0000255" key="2">
    <source>
        <dbReference type="PROSITE-ProRule" id="PRU00304"/>
    </source>
</evidence>
<evidence type="ECO:0000256" key="3">
    <source>
        <dbReference type="SAM" id="MobiDB-lite"/>
    </source>
</evidence>
<evidence type="ECO:0000303" key="4">
    <source>
    </source>
</evidence>
<evidence type="ECO:0000303" key="5">
    <source>
    </source>
</evidence>
<evidence type="ECO:0000305" key="6"/>
<organism>
    <name type="scientific">Mus musculus</name>
    <name type="common">Mouse</name>
    <dbReference type="NCBI Taxonomy" id="10090"/>
    <lineage>
        <taxon>Eukaryota</taxon>
        <taxon>Metazoa</taxon>
        <taxon>Chordata</taxon>
        <taxon>Craniata</taxon>
        <taxon>Vertebrata</taxon>
        <taxon>Euteleostomi</taxon>
        <taxon>Mammalia</taxon>
        <taxon>Eutheria</taxon>
        <taxon>Euarchontoglires</taxon>
        <taxon>Glires</taxon>
        <taxon>Rodentia</taxon>
        <taxon>Myomorpha</taxon>
        <taxon>Muroidea</taxon>
        <taxon>Muridae</taxon>
        <taxon>Murinae</taxon>
        <taxon>Mus</taxon>
        <taxon>Mus</taxon>
    </lineage>
</organism>
<comment type="function">
    <text evidence="1">Guanine nucleotide exchange factor (GEF) which may activate RAB9A and RAB9B. Promotes the exchange of GDP to GTP, converting inactive GDP-bound Rab proteins into their active GTP-bound form (By similarity).</text>
</comment>
<comment type="subcellular location">
    <subcellularLocation>
        <location evidence="1">Cytoplasm</location>
    </subcellularLocation>
</comment>
<comment type="alternative products">
    <event type="alternative splicing"/>
    <isoform>
        <id>Q91VV4-1</id>
        <name>1</name>
        <sequence type="displayed"/>
    </isoform>
    <isoform>
        <id>Q91VV4-2</id>
        <name>2</name>
        <sequence type="described" ref="VSP_019472"/>
    </isoform>
</comment>
<comment type="sequence caution" evidence="6">
    <conflict type="erroneous initiation">
        <sequence resource="EMBL-CDS" id="BAE34027"/>
    </conflict>
</comment>
<feature type="chain" id="PRO_0000242687" description="DENN domain-containing protein 2D">
    <location>
        <begin position="1"/>
        <end position="469"/>
    </location>
</feature>
<feature type="domain" description="uDENN" evidence="2">
    <location>
        <begin position="55"/>
        <end position="204"/>
    </location>
</feature>
<feature type="domain" description="cDENN" evidence="2">
    <location>
        <begin position="226"/>
        <end position="359"/>
    </location>
</feature>
<feature type="domain" description="dDENN" evidence="2">
    <location>
        <begin position="361"/>
        <end position="445"/>
    </location>
</feature>
<feature type="region of interest" description="Disordered" evidence="3">
    <location>
        <begin position="17"/>
        <end position="44"/>
    </location>
</feature>
<feature type="splice variant" id="VSP_019472" description="In isoform 2." evidence="4 5">
    <original>MEGQGVGRTLRLLRNRLPRLRA</original>
    <variation>MDGLGRRLRASLRLKRGQR</variation>
    <location>
        <begin position="1"/>
        <end position="22"/>
    </location>
</feature>
<feature type="sequence conflict" description="In Ref. 1; BAE34027." evidence="6" ref="1">
    <original>R</original>
    <variation>H</variation>
    <location>
        <position position="66"/>
    </location>
</feature>
<name>DEN2D_MOUSE</name>
<proteinExistence type="evidence at protein level"/>
<accession>Q91VV4</accession>
<accession>Q3U028</accession>
<accession>Q9D831</accession>
<protein>
    <recommendedName>
        <fullName>DENN domain-containing protein 2D</fullName>
    </recommendedName>
</protein>
<gene>
    <name type="primary">Dennd2d</name>
</gene>
<dbReference type="EMBL" id="AK008546">
    <property type="protein sequence ID" value="BAB25733.1"/>
    <property type="molecule type" value="mRNA"/>
</dbReference>
<dbReference type="EMBL" id="AK157279">
    <property type="protein sequence ID" value="BAE34027.1"/>
    <property type="status" value="ALT_INIT"/>
    <property type="molecule type" value="mRNA"/>
</dbReference>
<dbReference type="EMBL" id="BC008266">
    <property type="protein sequence ID" value="AAH08266.1"/>
    <property type="molecule type" value="mRNA"/>
</dbReference>
<dbReference type="EMBL" id="BC043727">
    <property type="protein sequence ID" value="AAH43727.1"/>
    <property type="molecule type" value="mRNA"/>
</dbReference>
<dbReference type="CCDS" id="CCDS51040.1">
    <molecule id="Q91VV4-2"/>
</dbReference>
<dbReference type="RefSeq" id="NP_001087223.1">
    <molecule id="Q91VV4-2"/>
    <property type="nucleotide sequence ID" value="NM_001093754.2"/>
</dbReference>
<dbReference type="RefSeq" id="NP_001265870.1">
    <property type="nucleotide sequence ID" value="NM_001278941.1"/>
</dbReference>
<dbReference type="SMR" id="Q91VV4"/>
<dbReference type="FunCoup" id="Q91VV4">
    <property type="interactions" value="771"/>
</dbReference>
<dbReference type="STRING" id="10090.ENSMUSP00000138462"/>
<dbReference type="PhosphoSitePlus" id="Q91VV4"/>
<dbReference type="PaxDb" id="10090-ENSMUSP00000138462"/>
<dbReference type="PeptideAtlas" id="Q91VV4"/>
<dbReference type="ProteomicsDB" id="279193">
    <molecule id="Q91VV4-1"/>
</dbReference>
<dbReference type="ProteomicsDB" id="279194">
    <molecule id="Q91VV4-2"/>
</dbReference>
<dbReference type="Antibodypedia" id="53750">
    <property type="antibodies" value="73 antibodies from 12 providers"/>
</dbReference>
<dbReference type="DNASU" id="72121"/>
<dbReference type="Ensembl" id="ENSMUST00000029508.11">
    <molecule id="Q91VV4-2"/>
    <property type="protein sequence ID" value="ENSMUSP00000029508.5"/>
    <property type="gene ID" value="ENSMUSG00000027901.13"/>
</dbReference>
<dbReference type="GeneID" id="72121"/>
<dbReference type="KEGG" id="mmu:72121"/>
<dbReference type="UCSC" id="uc008qwa.2">
    <molecule id="Q91VV4-2"/>
    <property type="organism name" value="mouse"/>
</dbReference>
<dbReference type="UCSC" id="uc012cvr.2">
    <molecule id="Q91VV4-1"/>
    <property type="organism name" value="mouse"/>
</dbReference>
<dbReference type="AGR" id="MGI:2181193"/>
<dbReference type="CTD" id="79961"/>
<dbReference type="MGI" id="MGI:2181193">
    <property type="gene designation" value="Dennd2d"/>
</dbReference>
<dbReference type="VEuPathDB" id="HostDB:ENSMUSG00000027901"/>
<dbReference type="eggNOG" id="KOG3569">
    <property type="taxonomic scope" value="Eukaryota"/>
</dbReference>
<dbReference type="GeneTree" id="ENSGT00950000182931"/>
<dbReference type="InParanoid" id="Q91VV4"/>
<dbReference type="OrthoDB" id="10266080at2759"/>
<dbReference type="PhylomeDB" id="Q91VV4"/>
<dbReference type="TreeFam" id="TF320336"/>
<dbReference type="Reactome" id="R-MMU-8876198">
    <property type="pathway name" value="RAB GEFs exchange GTP for GDP on RABs"/>
</dbReference>
<dbReference type="BioGRID-ORCS" id="72121">
    <property type="hits" value="6 hits in 74 CRISPR screens"/>
</dbReference>
<dbReference type="PRO" id="PR:Q91VV4"/>
<dbReference type="Proteomes" id="UP000000589">
    <property type="component" value="Chromosome 3"/>
</dbReference>
<dbReference type="RNAct" id="Q91VV4">
    <property type="molecule type" value="protein"/>
</dbReference>
<dbReference type="Bgee" id="ENSMUSG00000027901">
    <property type="expression patterns" value="Expressed in granulocyte and 130 other cell types or tissues"/>
</dbReference>
<dbReference type="ExpressionAtlas" id="Q91VV4">
    <property type="expression patterns" value="baseline and differential"/>
</dbReference>
<dbReference type="GO" id="GO:0005829">
    <property type="term" value="C:cytosol"/>
    <property type="evidence" value="ECO:0007669"/>
    <property type="project" value="Ensembl"/>
</dbReference>
<dbReference type="GO" id="GO:0005654">
    <property type="term" value="C:nucleoplasm"/>
    <property type="evidence" value="ECO:0007669"/>
    <property type="project" value="Ensembl"/>
</dbReference>
<dbReference type="GO" id="GO:0005085">
    <property type="term" value="F:guanyl-nucleotide exchange factor activity"/>
    <property type="evidence" value="ECO:0000250"/>
    <property type="project" value="UniProtKB"/>
</dbReference>
<dbReference type="FunFam" id="3.30.450.200:FF:000001">
    <property type="entry name" value="DENN domain-containing protein 2A isoform X1"/>
    <property type="match status" value="1"/>
</dbReference>
<dbReference type="FunFam" id="3.40.50.11500:FF:000004">
    <property type="entry name" value="DENN domain-containing protein 2C isoform X1"/>
    <property type="match status" value="1"/>
</dbReference>
<dbReference type="Gene3D" id="3.30.450.200">
    <property type="match status" value="1"/>
</dbReference>
<dbReference type="Gene3D" id="3.40.50.11500">
    <property type="match status" value="1"/>
</dbReference>
<dbReference type="InterPro" id="IPR001194">
    <property type="entry name" value="cDENN_dom"/>
</dbReference>
<dbReference type="InterPro" id="IPR005112">
    <property type="entry name" value="dDENN_dom"/>
</dbReference>
<dbReference type="InterPro" id="IPR043153">
    <property type="entry name" value="DENN_C"/>
</dbReference>
<dbReference type="InterPro" id="IPR051942">
    <property type="entry name" value="DENN_domain_containing_2"/>
</dbReference>
<dbReference type="InterPro" id="IPR037516">
    <property type="entry name" value="Tripartite_DENN"/>
</dbReference>
<dbReference type="InterPro" id="IPR005113">
    <property type="entry name" value="uDENN_dom"/>
</dbReference>
<dbReference type="PANTHER" id="PTHR15288">
    <property type="entry name" value="DENN DOMAIN-CONTAINING PROTEIN 2"/>
    <property type="match status" value="1"/>
</dbReference>
<dbReference type="PANTHER" id="PTHR15288:SF2">
    <property type="entry name" value="DENN DOMAIN-CONTAINING PROTEIN 2D"/>
    <property type="match status" value="1"/>
</dbReference>
<dbReference type="Pfam" id="PF03455">
    <property type="entry name" value="dDENN"/>
    <property type="match status" value="1"/>
</dbReference>
<dbReference type="Pfam" id="PF02141">
    <property type="entry name" value="DENN"/>
    <property type="match status" value="1"/>
</dbReference>
<dbReference type="Pfam" id="PF03456">
    <property type="entry name" value="uDENN"/>
    <property type="match status" value="1"/>
</dbReference>
<dbReference type="SMART" id="SM00801">
    <property type="entry name" value="dDENN"/>
    <property type="match status" value="1"/>
</dbReference>
<dbReference type="SMART" id="SM00799">
    <property type="entry name" value="DENN"/>
    <property type="match status" value="1"/>
</dbReference>
<dbReference type="SMART" id="SM00800">
    <property type="entry name" value="uDENN"/>
    <property type="match status" value="1"/>
</dbReference>
<dbReference type="PROSITE" id="PS50211">
    <property type="entry name" value="DENN"/>
    <property type="match status" value="1"/>
</dbReference>
<sequence length="469" mass="53211">MEGQGVGRTLRLLRNRLPRLRAGQSQNNPGEAVTEPERIQEHSPSSFAGGQHFFEYLLVVSLKKKRLGDDYEPTITYQFPKRENLLRGQQEEEDRLLSAIPLFCFPDGNEWAPLTEYPRETFSFVLTNVDGSRKIGYCRRLLPAGPGPQLPKVYCIISCIGCFGLFSKILDEVEKRHQISMAVIYPFMQGLREAAFPAPGKTVTLKSFIPDSGTEFISLTRPLDSHLEHVDFSVLLHCLHLEQIIQIFASAVLERKIIFLAEGLSTLSQCIHAAAALLYPFSWAHTYIPVVPESLLATVCCPTPFMVGVQMRFLQEVMDSPMEEVLLVNLCEGTFLLSVGDEKDILPPKLQDDILDSLGQGINELKTSEQINEHVSGPFVQFFVKTVGHYASYIKREASGQGHFQERSFCKAVTSKTKRRFVKKFVKTQLFSLFIQEAEKSRNPPAGYFQKKILEYEEQKKQKKSRERL</sequence>